<organism>
    <name type="scientific">Acinetobacter baumannii (strain AYE)</name>
    <dbReference type="NCBI Taxonomy" id="509173"/>
    <lineage>
        <taxon>Bacteria</taxon>
        <taxon>Pseudomonadati</taxon>
        <taxon>Pseudomonadota</taxon>
        <taxon>Gammaproteobacteria</taxon>
        <taxon>Moraxellales</taxon>
        <taxon>Moraxellaceae</taxon>
        <taxon>Acinetobacter</taxon>
        <taxon>Acinetobacter calcoaceticus/baumannii complex</taxon>
    </lineage>
</organism>
<name>Y3291_ACIBY</name>
<feature type="chain" id="PRO_0000346460" description="PKHD-type hydroxylase ABAYE3291">
    <location>
        <begin position="1"/>
        <end position="227"/>
    </location>
</feature>
<feature type="domain" description="Fe2OG dioxygenase" evidence="1">
    <location>
        <begin position="78"/>
        <end position="178"/>
    </location>
</feature>
<feature type="binding site" evidence="1">
    <location>
        <position position="96"/>
    </location>
    <ligand>
        <name>Fe cation</name>
        <dbReference type="ChEBI" id="CHEBI:24875"/>
    </ligand>
</feature>
<feature type="binding site" evidence="1">
    <location>
        <position position="98"/>
    </location>
    <ligand>
        <name>Fe cation</name>
        <dbReference type="ChEBI" id="CHEBI:24875"/>
    </ligand>
</feature>
<feature type="binding site" evidence="1">
    <location>
        <position position="159"/>
    </location>
    <ligand>
        <name>Fe cation</name>
        <dbReference type="ChEBI" id="CHEBI:24875"/>
    </ligand>
</feature>
<feature type="binding site" evidence="1">
    <location>
        <position position="169"/>
    </location>
    <ligand>
        <name>2-oxoglutarate</name>
        <dbReference type="ChEBI" id="CHEBI:16810"/>
    </ligand>
</feature>
<comment type="cofactor">
    <cofactor evidence="1">
        <name>Fe(2+)</name>
        <dbReference type="ChEBI" id="CHEBI:29033"/>
    </cofactor>
    <text evidence="1">Binds 1 Fe(2+) ion per subunit.</text>
</comment>
<comment type="cofactor">
    <cofactor evidence="1">
        <name>L-ascorbate</name>
        <dbReference type="ChEBI" id="CHEBI:38290"/>
    </cofactor>
</comment>
<dbReference type="EC" id="1.14.11.-" evidence="1"/>
<dbReference type="EMBL" id="CU459141">
    <property type="protein sequence ID" value="CAM88091.1"/>
    <property type="molecule type" value="Genomic_DNA"/>
</dbReference>
<dbReference type="RefSeq" id="WP_001984475.1">
    <property type="nucleotide sequence ID" value="NZ_JBDGFB010000008.1"/>
</dbReference>
<dbReference type="SMR" id="B0V4R8"/>
<dbReference type="EnsemblBacteria" id="CAM88091">
    <property type="protein sequence ID" value="CAM88091"/>
    <property type="gene ID" value="ABAYE3291"/>
</dbReference>
<dbReference type="KEGG" id="aby:ABAYE3291"/>
<dbReference type="HOGENOM" id="CLU_106663_0_0_6"/>
<dbReference type="GO" id="GO:0016706">
    <property type="term" value="F:2-oxoglutarate-dependent dioxygenase activity"/>
    <property type="evidence" value="ECO:0007669"/>
    <property type="project" value="UniProtKB-UniRule"/>
</dbReference>
<dbReference type="GO" id="GO:0005506">
    <property type="term" value="F:iron ion binding"/>
    <property type="evidence" value="ECO:0007669"/>
    <property type="project" value="UniProtKB-UniRule"/>
</dbReference>
<dbReference type="GO" id="GO:0031418">
    <property type="term" value="F:L-ascorbic acid binding"/>
    <property type="evidence" value="ECO:0007669"/>
    <property type="project" value="UniProtKB-KW"/>
</dbReference>
<dbReference type="GO" id="GO:0006974">
    <property type="term" value="P:DNA damage response"/>
    <property type="evidence" value="ECO:0007669"/>
    <property type="project" value="TreeGrafter"/>
</dbReference>
<dbReference type="GO" id="GO:0006879">
    <property type="term" value="P:intracellular iron ion homeostasis"/>
    <property type="evidence" value="ECO:0007669"/>
    <property type="project" value="TreeGrafter"/>
</dbReference>
<dbReference type="Gene3D" id="2.60.120.620">
    <property type="entry name" value="q2cbj1_9rhob like domain"/>
    <property type="match status" value="1"/>
</dbReference>
<dbReference type="Gene3D" id="4.10.860.20">
    <property type="entry name" value="Rabenosyn, Rab binding domain"/>
    <property type="match status" value="1"/>
</dbReference>
<dbReference type="HAMAP" id="MF_00657">
    <property type="entry name" value="Hydroxyl_YbiX"/>
    <property type="match status" value="1"/>
</dbReference>
<dbReference type="InterPro" id="IPR005123">
    <property type="entry name" value="Oxoglu/Fe-dep_dioxygenase_dom"/>
</dbReference>
<dbReference type="InterPro" id="IPR041097">
    <property type="entry name" value="PKHD_C"/>
</dbReference>
<dbReference type="InterPro" id="IPR023550">
    <property type="entry name" value="PKHD_hydroxylase"/>
</dbReference>
<dbReference type="InterPro" id="IPR006620">
    <property type="entry name" value="Pro_4_hyd_alph"/>
</dbReference>
<dbReference type="InterPro" id="IPR044862">
    <property type="entry name" value="Pro_4_hyd_alph_FE2OG_OXY"/>
</dbReference>
<dbReference type="NCBIfam" id="NF003973">
    <property type="entry name" value="PRK05467.1-2"/>
    <property type="match status" value="1"/>
</dbReference>
<dbReference type="NCBIfam" id="NF003974">
    <property type="entry name" value="PRK05467.1-3"/>
    <property type="match status" value="1"/>
</dbReference>
<dbReference type="NCBIfam" id="NF003975">
    <property type="entry name" value="PRK05467.1-4"/>
    <property type="match status" value="1"/>
</dbReference>
<dbReference type="PANTHER" id="PTHR41536">
    <property type="entry name" value="PKHD-TYPE HYDROXYLASE YBIX"/>
    <property type="match status" value="1"/>
</dbReference>
<dbReference type="PANTHER" id="PTHR41536:SF1">
    <property type="entry name" value="PKHD-TYPE HYDROXYLASE YBIX"/>
    <property type="match status" value="1"/>
</dbReference>
<dbReference type="Pfam" id="PF13640">
    <property type="entry name" value="2OG-FeII_Oxy_3"/>
    <property type="match status" value="1"/>
</dbReference>
<dbReference type="Pfam" id="PF18331">
    <property type="entry name" value="PKHD_C"/>
    <property type="match status" value="1"/>
</dbReference>
<dbReference type="SMART" id="SM00702">
    <property type="entry name" value="P4Hc"/>
    <property type="match status" value="1"/>
</dbReference>
<dbReference type="SUPFAM" id="SSF51197">
    <property type="entry name" value="Clavaminate synthase-like"/>
    <property type="match status" value="1"/>
</dbReference>
<dbReference type="PROSITE" id="PS51471">
    <property type="entry name" value="FE2OG_OXY"/>
    <property type="match status" value="1"/>
</dbReference>
<accession>B0V4R8</accession>
<evidence type="ECO:0000255" key="1">
    <source>
        <dbReference type="HAMAP-Rule" id="MF_00657"/>
    </source>
</evidence>
<protein>
    <recommendedName>
        <fullName evidence="1">PKHD-type hydroxylase ABAYE3291</fullName>
        <ecNumber evidence="1">1.14.11.-</ecNumber>
    </recommendedName>
</protein>
<gene>
    <name type="ordered locus">ABAYE3291</name>
</gene>
<keyword id="KW-0223">Dioxygenase</keyword>
<keyword id="KW-0408">Iron</keyword>
<keyword id="KW-0479">Metal-binding</keyword>
<keyword id="KW-0560">Oxidoreductase</keyword>
<keyword id="KW-0847">Vitamin C</keyword>
<proteinExistence type="inferred from homology"/>
<sequence length="227" mass="26169">MIHHIPNVLSKEQVQYFRNEMDKIEWVNGKVTAGTLSATVKRNQQLPEDHPLTHHLSNIILEALGTHPLFLSAAIPLDIIPPLFNRYENQESFGFHVDNSIRRIRGTNERLRTDLSCTLFLSEPEEYEGGDLVVEDTYGYHEVKLPAGDMILYPSTSLHEVTAITSGCRIASFFWVQSMVRDDAERHMLFNLDQTVQNLRMQLGDNHSEVIKLTNLYHNLMRKWAEL</sequence>
<reference key="1">
    <citation type="journal article" date="2008" name="PLoS ONE">
        <title>Comparative analysis of Acinetobacters: three genomes for three lifestyles.</title>
        <authorList>
            <person name="Vallenet D."/>
            <person name="Nordmann P."/>
            <person name="Barbe V."/>
            <person name="Poirel L."/>
            <person name="Mangenot S."/>
            <person name="Bataille E."/>
            <person name="Dossat C."/>
            <person name="Gas S."/>
            <person name="Kreimeyer A."/>
            <person name="Lenoble P."/>
            <person name="Oztas S."/>
            <person name="Poulain J."/>
            <person name="Segurens B."/>
            <person name="Robert C."/>
            <person name="Abergel C."/>
            <person name="Claverie J.-M."/>
            <person name="Raoult D."/>
            <person name="Medigue C."/>
            <person name="Weissenbach J."/>
            <person name="Cruveiller S."/>
        </authorList>
    </citation>
    <scope>NUCLEOTIDE SEQUENCE [LARGE SCALE GENOMIC DNA]</scope>
    <source>
        <strain>AYE</strain>
    </source>
</reference>